<keyword id="KW-0484">Methanogenesis</keyword>
<keyword id="KW-0554">One-carbon metabolism</keyword>
<keyword id="KW-0560">Oxidoreductase</keyword>
<keyword id="KW-1185">Reference proteome</keyword>
<feature type="chain" id="PRO_1000149886" description="5,10-methenyltetrahydromethanopterin hydrogenase">
    <location>
        <begin position="1"/>
        <end position="354"/>
    </location>
</feature>
<dbReference type="EC" id="1.12.98.2" evidence="1"/>
<dbReference type="EMBL" id="BX950229">
    <property type="protein sequence ID" value="CAF29683.1"/>
    <property type="molecule type" value="Genomic_DNA"/>
</dbReference>
<dbReference type="RefSeq" id="WP_011170071.1">
    <property type="nucleotide sequence ID" value="NC_005791.1"/>
</dbReference>
<dbReference type="SMR" id="Q6M0Z1"/>
<dbReference type="STRING" id="267377.MMP0127"/>
<dbReference type="EnsemblBacteria" id="CAF29683">
    <property type="protein sequence ID" value="CAF29683"/>
    <property type="gene ID" value="MMP0127"/>
</dbReference>
<dbReference type="GeneID" id="2761547"/>
<dbReference type="KEGG" id="mmp:MMP0127"/>
<dbReference type="PATRIC" id="fig|267377.15.peg.128"/>
<dbReference type="eggNOG" id="arCOG03196">
    <property type="taxonomic scope" value="Archaea"/>
</dbReference>
<dbReference type="HOGENOM" id="CLU_772960_0_0_2"/>
<dbReference type="OrthoDB" id="113982at2157"/>
<dbReference type="UniPathway" id="UPA00640">
    <property type="reaction ID" value="UER00696"/>
</dbReference>
<dbReference type="Proteomes" id="UP000000590">
    <property type="component" value="Chromosome"/>
</dbReference>
<dbReference type="GO" id="GO:0047068">
    <property type="term" value="F:N5,N10-methenyltetrahydromethanopterin hydrogenase activity"/>
    <property type="evidence" value="ECO:0007669"/>
    <property type="project" value="UniProtKB-UniRule"/>
</dbReference>
<dbReference type="GO" id="GO:0004735">
    <property type="term" value="F:pyrroline-5-carboxylate reductase activity"/>
    <property type="evidence" value="ECO:0007669"/>
    <property type="project" value="TreeGrafter"/>
</dbReference>
<dbReference type="GO" id="GO:0055129">
    <property type="term" value="P:L-proline biosynthetic process"/>
    <property type="evidence" value="ECO:0007669"/>
    <property type="project" value="TreeGrafter"/>
</dbReference>
<dbReference type="GO" id="GO:0019386">
    <property type="term" value="P:methanogenesis, from carbon dioxide"/>
    <property type="evidence" value="ECO:0007669"/>
    <property type="project" value="UniProtKB-UniRule"/>
</dbReference>
<dbReference type="GO" id="GO:0006730">
    <property type="term" value="P:one-carbon metabolic process"/>
    <property type="evidence" value="ECO:0007669"/>
    <property type="project" value="UniProtKB-UniRule"/>
</dbReference>
<dbReference type="Gene3D" id="1.20.120.1300">
    <property type="entry name" value="Hmd, C-terminal helical subdomain"/>
    <property type="match status" value="1"/>
</dbReference>
<dbReference type="Gene3D" id="3.40.50.720">
    <property type="entry name" value="NAD(P)-binding Rossmann-like Domain"/>
    <property type="match status" value="1"/>
</dbReference>
<dbReference type="HAMAP" id="MF_01090">
    <property type="entry name" value="HMD"/>
    <property type="match status" value="1"/>
</dbReference>
<dbReference type="InterPro" id="IPR008927">
    <property type="entry name" value="6-PGluconate_DH-like_C_sf"/>
</dbReference>
<dbReference type="InterPro" id="IPR010062">
    <property type="entry name" value="HMD"/>
</dbReference>
<dbReference type="InterPro" id="IPR004889">
    <property type="entry name" value="HMD_C"/>
</dbReference>
<dbReference type="InterPro" id="IPR038182">
    <property type="entry name" value="HMD_C_sf"/>
</dbReference>
<dbReference type="InterPro" id="IPR055205">
    <property type="entry name" value="HMD_N"/>
</dbReference>
<dbReference type="InterPro" id="IPR024190">
    <property type="entry name" value="METHMP_Hmd"/>
</dbReference>
<dbReference type="InterPro" id="IPR036291">
    <property type="entry name" value="NAD(P)-bd_dom_sf"/>
</dbReference>
<dbReference type="NCBIfam" id="TIGR01723">
    <property type="entry name" value="hmd_TIGR"/>
    <property type="match status" value="1"/>
</dbReference>
<dbReference type="PANTHER" id="PTHR11645">
    <property type="entry name" value="PYRROLINE-5-CARBOXYLATE REDUCTASE"/>
    <property type="match status" value="1"/>
</dbReference>
<dbReference type="PANTHER" id="PTHR11645:SF0">
    <property type="entry name" value="PYRROLINE-5-CARBOXYLATE REDUCTASE 3"/>
    <property type="match status" value="1"/>
</dbReference>
<dbReference type="Pfam" id="PF03201">
    <property type="entry name" value="HMD"/>
    <property type="match status" value="1"/>
</dbReference>
<dbReference type="Pfam" id="PF22616">
    <property type="entry name" value="HMD_N"/>
    <property type="match status" value="1"/>
</dbReference>
<dbReference type="PIRSF" id="PIRSF016158">
    <property type="entry name" value="HMD"/>
    <property type="match status" value="1"/>
</dbReference>
<dbReference type="PIRSF" id="PIRSF500165">
    <property type="entry name" value="HMDI"/>
    <property type="match status" value="1"/>
</dbReference>
<dbReference type="SUPFAM" id="SSF48179">
    <property type="entry name" value="6-phosphogluconate dehydrogenase C-terminal domain-like"/>
    <property type="match status" value="1"/>
</dbReference>
<dbReference type="SUPFAM" id="SSF51735">
    <property type="entry name" value="NAD(P)-binding Rossmann-fold domains"/>
    <property type="match status" value="1"/>
</dbReference>
<protein>
    <recommendedName>
        <fullName evidence="1">5,10-methenyltetrahydromethanopterin hydrogenase</fullName>
        <ecNumber evidence="1">1.12.98.2</ecNumber>
    </recommendedName>
    <alternativeName>
        <fullName evidence="1">H(2)-dependent methylene-H(4)MPT dehydrogenase</fullName>
    </alternativeName>
    <alternativeName>
        <fullName evidence="1">H(2)-forming N(5),N(10)-methylenetetrahydromethanopterin dehydrogenase</fullName>
    </alternativeName>
    <alternativeName>
        <fullName evidence="1">N(5),N(10)-methenyltetrahydromethanopterin hydrogenase</fullName>
    </alternativeName>
</protein>
<sequence length="354" mass="37868">MKVAILGAGCYRTHAASGITNFSRASQVAKEAGIPEIAMTHSTITMGAELLHLIPEITEVVVSDPCFAEEPGMVVLDQFDYKAVMEAHLAGDAEKVMPEIREAVKAKAKETPKPPKGCIHFVHPETVGLKVTASDVEAVKDADIVITWLPKGGSQPAIIEKFASEIKKGAIVTHACTIPTPKFAKIFKDLGRDDLNIIAYHPGAVPEMKGQAFLSEGLADAEKVEEFYCMAKTARGEAFKMPANLISPVCDMGSAVTAPVYAAILAYRDAVTQILGAPADFAQMMADEAISQILDLMRNEGIKNMEDKLNPKALTGTADSMCFGPLADILPASLKVLEKHANENKCECGCSIKP</sequence>
<name>HMD_METMP</name>
<proteinExistence type="inferred from homology"/>
<gene>
    <name evidence="1" type="primary">hmd</name>
    <name type="ordered locus">MMP0127</name>
</gene>
<evidence type="ECO:0000255" key="1">
    <source>
        <dbReference type="HAMAP-Rule" id="MF_01090"/>
    </source>
</evidence>
<organism>
    <name type="scientific">Methanococcus maripaludis (strain DSM 14266 / JCM 13030 / NBRC 101832 / S2 / LL)</name>
    <dbReference type="NCBI Taxonomy" id="267377"/>
    <lineage>
        <taxon>Archaea</taxon>
        <taxon>Methanobacteriati</taxon>
        <taxon>Methanobacteriota</taxon>
        <taxon>Methanomada group</taxon>
        <taxon>Methanococci</taxon>
        <taxon>Methanococcales</taxon>
        <taxon>Methanococcaceae</taxon>
        <taxon>Methanococcus</taxon>
    </lineage>
</organism>
<reference key="1">
    <citation type="journal article" date="2004" name="J. Bacteriol.">
        <title>Complete genome sequence of the genetically tractable hydrogenotrophic methanogen Methanococcus maripaludis.</title>
        <authorList>
            <person name="Hendrickson E.L."/>
            <person name="Kaul R."/>
            <person name="Zhou Y."/>
            <person name="Bovee D."/>
            <person name="Chapman P."/>
            <person name="Chung J."/>
            <person name="Conway de Macario E."/>
            <person name="Dodsworth J.A."/>
            <person name="Gillett W."/>
            <person name="Graham D.E."/>
            <person name="Hackett M."/>
            <person name="Haydock A.K."/>
            <person name="Kang A."/>
            <person name="Land M.L."/>
            <person name="Levy R."/>
            <person name="Lie T.J."/>
            <person name="Major T.A."/>
            <person name="Moore B.C."/>
            <person name="Porat I."/>
            <person name="Palmeiri A."/>
            <person name="Rouse G."/>
            <person name="Saenphimmachak C."/>
            <person name="Soell D."/>
            <person name="Van Dien S."/>
            <person name="Wang T."/>
            <person name="Whitman W.B."/>
            <person name="Xia Q."/>
            <person name="Zhang Y."/>
            <person name="Larimer F.W."/>
            <person name="Olson M.V."/>
            <person name="Leigh J.A."/>
        </authorList>
    </citation>
    <scope>NUCLEOTIDE SEQUENCE [LARGE SCALE GENOMIC DNA]</scope>
    <source>
        <strain>DSM 14266 / JCM 13030 / NBRC 101832 / S2 / LL</strain>
    </source>
</reference>
<comment type="function">
    <text evidence="1">Catalyzes the reversible reduction of methenyl-H(4)MPT(+) to methylene-H(4)MPT.</text>
</comment>
<comment type="catalytic activity">
    <reaction evidence="1">
        <text>5,10-methenyl-5,6,7,8-tetrahydromethanopterin + H2 = 5,10-methylenetetrahydromethanopterin + H(+)</text>
        <dbReference type="Rhea" id="RHEA:20017"/>
        <dbReference type="ChEBI" id="CHEBI:15378"/>
        <dbReference type="ChEBI" id="CHEBI:18276"/>
        <dbReference type="ChEBI" id="CHEBI:57818"/>
        <dbReference type="ChEBI" id="CHEBI:58337"/>
        <dbReference type="EC" id="1.12.98.2"/>
    </reaction>
</comment>
<comment type="pathway">
    <text evidence="1">One-carbon metabolism; methanogenesis from CO(2); 5,10-methylene-5,6,7,8-tetrahydromethanopterin from 5,10-methenyl-5,6,7,8-tetrahydromethanopterin (hydrogen route): step 1/1.</text>
</comment>
<comment type="similarity">
    <text evidence="1">Belongs to the HMD family.</text>
</comment>
<accession>Q6M0Z1</accession>